<feature type="chain" id="PRO_0000344894" description="Ribonuclease Y">
    <location>
        <begin position="1"/>
        <end position="540"/>
    </location>
</feature>
<feature type="transmembrane region" description="Helical" evidence="1">
    <location>
        <begin position="4"/>
        <end position="24"/>
    </location>
</feature>
<feature type="domain" description="KH" evidence="1">
    <location>
        <begin position="230"/>
        <end position="293"/>
    </location>
</feature>
<feature type="domain" description="HD" evidence="2">
    <location>
        <begin position="356"/>
        <end position="449"/>
    </location>
</feature>
<reference key="1">
    <citation type="journal article" date="2006" name="Proc. Natl. Acad. Sci. U.S.A.">
        <title>Comparative genomics of the lactic acid bacteria.</title>
        <authorList>
            <person name="Makarova K.S."/>
            <person name="Slesarev A."/>
            <person name="Wolf Y.I."/>
            <person name="Sorokin A."/>
            <person name="Mirkin B."/>
            <person name="Koonin E.V."/>
            <person name="Pavlov A."/>
            <person name="Pavlova N."/>
            <person name="Karamychev V."/>
            <person name="Polouchine N."/>
            <person name="Shakhova V."/>
            <person name="Grigoriev I."/>
            <person name="Lou Y."/>
            <person name="Rohksar D."/>
            <person name="Lucas S."/>
            <person name="Huang K."/>
            <person name="Goodstein D.M."/>
            <person name="Hawkins T."/>
            <person name="Plengvidhya V."/>
            <person name="Welker D."/>
            <person name="Hughes J."/>
            <person name="Goh Y."/>
            <person name="Benson A."/>
            <person name="Baldwin K."/>
            <person name="Lee J.-H."/>
            <person name="Diaz-Muniz I."/>
            <person name="Dosti B."/>
            <person name="Smeianov V."/>
            <person name="Wechter W."/>
            <person name="Barabote R."/>
            <person name="Lorca G."/>
            <person name="Altermann E."/>
            <person name="Barrangou R."/>
            <person name="Ganesan B."/>
            <person name="Xie Y."/>
            <person name="Rawsthorne H."/>
            <person name="Tamir D."/>
            <person name="Parker C."/>
            <person name="Breidt F."/>
            <person name="Broadbent J.R."/>
            <person name="Hutkins R."/>
            <person name="O'Sullivan D."/>
            <person name="Steele J."/>
            <person name="Unlu G."/>
            <person name="Saier M.H. Jr."/>
            <person name="Klaenhammer T."/>
            <person name="Richardson P."/>
            <person name="Kozyavkin S."/>
            <person name="Weimer B.C."/>
            <person name="Mills D.A."/>
        </authorList>
    </citation>
    <scope>NUCLEOTIDE SEQUENCE [LARGE SCALE GENOMIC DNA]</scope>
    <source>
        <strain>ATCC 33323 / DSM 20243 / BCRC 14619 / CIP 102991 / JCM 1131 / KCTC 3163 / NCIMB 11718 / NCTC 13722 / AM63</strain>
    </source>
</reference>
<dbReference type="EC" id="3.1.-.-" evidence="1"/>
<dbReference type="EMBL" id="CP000413">
    <property type="protein sequence ID" value="ABJ60699.1"/>
    <property type="molecule type" value="Genomic_DNA"/>
</dbReference>
<dbReference type="RefSeq" id="WP_003646985.1">
    <property type="nucleotide sequence ID" value="NZ_WBMG01000003.1"/>
</dbReference>
<dbReference type="SMR" id="Q042C3"/>
<dbReference type="GeneID" id="29640085"/>
<dbReference type="KEGG" id="lga:LGAS_1337"/>
<dbReference type="HOGENOM" id="CLU_028328_1_0_9"/>
<dbReference type="BioCyc" id="LGAS324831:G1G6Y-1331-MONOMER"/>
<dbReference type="Proteomes" id="UP000000664">
    <property type="component" value="Chromosome"/>
</dbReference>
<dbReference type="GO" id="GO:0005886">
    <property type="term" value="C:plasma membrane"/>
    <property type="evidence" value="ECO:0007669"/>
    <property type="project" value="UniProtKB-SubCell"/>
</dbReference>
<dbReference type="GO" id="GO:0003723">
    <property type="term" value="F:RNA binding"/>
    <property type="evidence" value="ECO:0007669"/>
    <property type="project" value="UniProtKB-UniRule"/>
</dbReference>
<dbReference type="GO" id="GO:0004521">
    <property type="term" value="F:RNA endonuclease activity"/>
    <property type="evidence" value="ECO:0007669"/>
    <property type="project" value="UniProtKB-UniRule"/>
</dbReference>
<dbReference type="GO" id="GO:0006402">
    <property type="term" value="P:mRNA catabolic process"/>
    <property type="evidence" value="ECO:0007669"/>
    <property type="project" value="UniProtKB-UniRule"/>
</dbReference>
<dbReference type="CDD" id="cd00077">
    <property type="entry name" value="HDc"/>
    <property type="match status" value="1"/>
</dbReference>
<dbReference type="CDD" id="cd22431">
    <property type="entry name" value="KH-I_RNaseY"/>
    <property type="match status" value="1"/>
</dbReference>
<dbReference type="Gene3D" id="1.10.3210.10">
    <property type="entry name" value="Hypothetical protein af1432"/>
    <property type="match status" value="1"/>
</dbReference>
<dbReference type="Gene3D" id="3.30.1370.10">
    <property type="entry name" value="K Homology domain, type 1"/>
    <property type="match status" value="1"/>
</dbReference>
<dbReference type="HAMAP" id="MF_00335">
    <property type="entry name" value="RNase_Y"/>
    <property type="match status" value="1"/>
</dbReference>
<dbReference type="InterPro" id="IPR003607">
    <property type="entry name" value="HD/PDEase_dom"/>
</dbReference>
<dbReference type="InterPro" id="IPR006674">
    <property type="entry name" value="HD_domain"/>
</dbReference>
<dbReference type="InterPro" id="IPR006675">
    <property type="entry name" value="HDIG_dom"/>
</dbReference>
<dbReference type="InterPro" id="IPR004087">
    <property type="entry name" value="KH_dom"/>
</dbReference>
<dbReference type="InterPro" id="IPR004088">
    <property type="entry name" value="KH_dom_type_1"/>
</dbReference>
<dbReference type="InterPro" id="IPR036612">
    <property type="entry name" value="KH_dom_type_1_sf"/>
</dbReference>
<dbReference type="InterPro" id="IPR017705">
    <property type="entry name" value="Ribonuclease_Y"/>
</dbReference>
<dbReference type="InterPro" id="IPR022711">
    <property type="entry name" value="RNase_Y_N"/>
</dbReference>
<dbReference type="NCBIfam" id="TIGR00277">
    <property type="entry name" value="HDIG"/>
    <property type="match status" value="1"/>
</dbReference>
<dbReference type="NCBIfam" id="TIGR03319">
    <property type="entry name" value="RNase_Y"/>
    <property type="match status" value="1"/>
</dbReference>
<dbReference type="PANTHER" id="PTHR12826">
    <property type="entry name" value="RIBONUCLEASE Y"/>
    <property type="match status" value="1"/>
</dbReference>
<dbReference type="PANTHER" id="PTHR12826:SF15">
    <property type="entry name" value="RIBONUCLEASE Y"/>
    <property type="match status" value="1"/>
</dbReference>
<dbReference type="Pfam" id="PF01966">
    <property type="entry name" value="HD"/>
    <property type="match status" value="1"/>
</dbReference>
<dbReference type="Pfam" id="PF00013">
    <property type="entry name" value="KH_1"/>
    <property type="match status" value="1"/>
</dbReference>
<dbReference type="Pfam" id="PF12072">
    <property type="entry name" value="RNase_Y_N"/>
    <property type="match status" value="1"/>
</dbReference>
<dbReference type="SMART" id="SM00471">
    <property type="entry name" value="HDc"/>
    <property type="match status" value="1"/>
</dbReference>
<dbReference type="SMART" id="SM00322">
    <property type="entry name" value="KH"/>
    <property type="match status" value="1"/>
</dbReference>
<dbReference type="SUPFAM" id="SSF54791">
    <property type="entry name" value="Eukaryotic type KH-domain (KH-domain type I)"/>
    <property type="match status" value="1"/>
</dbReference>
<dbReference type="SUPFAM" id="SSF109604">
    <property type="entry name" value="HD-domain/PDEase-like"/>
    <property type="match status" value="1"/>
</dbReference>
<dbReference type="PROSITE" id="PS51831">
    <property type="entry name" value="HD"/>
    <property type="match status" value="1"/>
</dbReference>
<dbReference type="PROSITE" id="PS50084">
    <property type="entry name" value="KH_TYPE_1"/>
    <property type="match status" value="1"/>
</dbReference>
<sequence>MINTILVPVAVAIVSVLVGGCAGYSLRKNKWETQAQNAAHDAKHILADAESKAKAVEADLASQQEAMKKAAADAKKEKILEAQEEIHHYRERVDNELNERRQEVSRQENRLLQREDAIDHKDSLLDQKDSQLTQKENQIKKLQAQVLEKEKRADQLVTEREQKLYEVAELSQEDAKKIVLDKLSDQLVKERAEMIEESNQLAKAKADHFARKVIVDAIQSSAADTVSEKTVSVVNLPNDDMKGRIIGREGRNIRSFEALTGVDVIIDDTPDVVVLSGFDPIRREIAKRALERLIKDGRIHPARIEEMVDRARKEVNDDIYEAGESALMELGIHKMHPELVKILGRLKYRTSYGQNVLSHSIEVGKLTGVMAAELGLDEKIAVRAGLLHDIGKSIDHEIEGSHVEIGVELARKYHEPDLVVNAIAAHHDDVPKLSFIAELVVAADTISSARPGARSESLENYIRRLEQLETIAKGHIGVKQAYAIQAGREIRVMVEPDKISDARTTILAHDIKNQIEQDMEYPGNIKVTVIREKRAVAIAK</sequence>
<organism>
    <name type="scientific">Lactobacillus gasseri (strain ATCC 33323 / DSM 20243 / BCRC 14619 / CIP 102991 / JCM 1131 / KCTC 3163 / NCIMB 11718 / NCTC 13722 / AM63)</name>
    <dbReference type="NCBI Taxonomy" id="324831"/>
    <lineage>
        <taxon>Bacteria</taxon>
        <taxon>Bacillati</taxon>
        <taxon>Bacillota</taxon>
        <taxon>Bacilli</taxon>
        <taxon>Lactobacillales</taxon>
        <taxon>Lactobacillaceae</taxon>
        <taxon>Lactobacillus</taxon>
    </lineage>
</organism>
<evidence type="ECO:0000255" key="1">
    <source>
        <dbReference type="HAMAP-Rule" id="MF_00335"/>
    </source>
</evidence>
<evidence type="ECO:0000255" key="2">
    <source>
        <dbReference type="PROSITE-ProRule" id="PRU01175"/>
    </source>
</evidence>
<keyword id="KW-1003">Cell membrane</keyword>
<keyword id="KW-0255">Endonuclease</keyword>
<keyword id="KW-0378">Hydrolase</keyword>
<keyword id="KW-0472">Membrane</keyword>
<keyword id="KW-0540">Nuclease</keyword>
<keyword id="KW-0694">RNA-binding</keyword>
<keyword id="KW-0812">Transmembrane</keyword>
<keyword id="KW-1133">Transmembrane helix</keyword>
<protein>
    <recommendedName>
        <fullName evidence="1">Ribonuclease Y</fullName>
        <shortName evidence="1">RNase Y</shortName>
        <ecNumber evidence="1">3.1.-.-</ecNumber>
    </recommendedName>
</protein>
<proteinExistence type="inferred from homology"/>
<name>RNY_LACGA</name>
<comment type="function">
    <text evidence="1">Endoribonuclease that initiates mRNA decay.</text>
</comment>
<comment type="subcellular location">
    <subcellularLocation>
        <location evidence="1">Cell membrane</location>
        <topology evidence="1">Single-pass membrane protein</topology>
    </subcellularLocation>
</comment>
<comment type="similarity">
    <text evidence="1">Belongs to the RNase Y family.</text>
</comment>
<gene>
    <name evidence="1" type="primary">rny</name>
    <name type="ordered locus">LGAS_1337</name>
</gene>
<accession>Q042C3</accession>